<name>ATMB_ASPFL</name>
<reference key="1">
    <citation type="journal article" date="2009" name="Appl. Environ. Microbiol.">
        <title>Identification of two aflatrem biosynthesis gene loci in Aspergillus flavus and metabolic engineering of Penicillium paxilli to elucidate their function.</title>
        <authorList>
            <person name="Nicholson M.J."/>
            <person name="Koulman A."/>
            <person name="Monahan B.J."/>
            <person name="Pritchard B.L."/>
            <person name="Payne G.A."/>
            <person name="Scott B."/>
        </authorList>
    </citation>
    <scope>NUCLEOTIDE SEQUENCE [GENOMIC DNA]</scope>
    <scope>IDENTIFICATION</scope>
    <scope>INDUCTION</scope>
    <scope>FUNCTION</scope>
    <source>
        <strain>NRRL 6541</strain>
    </source>
</reference>
<reference key="2">
    <citation type="journal article" date="1985" name="Environ. Health Perspect.">
        <title>Aflatrem: a tremorgenic mycotoxin with acute neurotoxic effects.</title>
        <authorList>
            <person name="Valdes J.J."/>
            <person name="Cameron J.E."/>
            <person name="Cole R.J."/>
        </authorList>
    </citation>
    <scope>FUNCTION</scope>
</reference>
<reference key="3">
    <citation type="journal article" date="2016" name="Microbiol. Res.">
        <title>RNA sequencing of an nsdC mutant reveals global regulation of secondary metabolic gene clusters in Aspergillus flavus.</title>
        <authorList>
            <person name="Gilbert M.K."/>
            <person name="Mack B.M."/>
            <person name="Wei Q."/>
            <person name="Bland J.M."/>
            <person name="Bhatnagar D."/>
            <person name="Cary J.W."/>
        </authorList>
    </citation>
    <scope>INDUCTION</scope>
</reference>
<dbReference type="EC" id="4.2.3.-" evidence="1"/>
<dbReference type="EMBL" id="AM921700">
    <property type="protein sequence ID" value="CAP53939.1"/>
    <property type="molecule type" value="Genomic_DNA"/>
</dbReference>
<dbReference type="VEuPathDB" id="FungiDB:AFLA_008140"/>
<dbReference type="VEuPathDB" id="FungiDB:F9C07_5878"/>
<dbReference type="GO" id="GO:0016020">
    <property type="term" value="C:membrane"/>
    <property type="evidence" value="ECO:0007669"/>
    <property type="project" value="UniProtKB-SubCell"/>
</dbReference>
<dbReference type="GO" id="GO:0016829">
    <property type="term" value="F:lyase activity"/>
    <property type="evidence" value="ECO:0007669"/>
    <property type="project" value="UniProtKB-KW"/>
</dbReference>
<dbReference type="InterPro" id="IPR039020">
    <property type="entry name" value="PaxB-like"/>
</dbReference>
<dbReference type="PANTHER" id="PTHR42038">
    <property type="match status" value="1"/>
</dbReference>
<dbReference type="PANTHER" id="PTHR42038:SF2">
    <property type="entry name" value="TERPENE CYCLASE AUSL"/>
    <property type="match status" value="1"/>
</dbReference>
<dbReference type="Pfam" id="PF25129">
    <property type="entry name" value="Pyr4-TMTC"/>
    <property type="match status" value="1"/>
</dbReference>
<protein>
    <recommendedName>
        <fullName evidence="1">Terpene cyclase atmB</fullName>
        <ecNumber evidence="1">4.2.3.-</ecNumber>
    </recommendedName>
    <alternativeName>
        <fullName evidence="6">Aflatrem synthesis protein B</fullName>
    </alternativeName>
</protein>
<sequence>MDGFGSSQAPAAYREVEWIADVFVIGMGIGWIINYVGMVYGSLKGRTYGMAIMPLCCNIAWEIVYGLIYPSKTLYEQGVFLSGLTINLGVIYTAIKFGPKEWTHAPLVMHNLPLIFMLGILGFLTGHLALAAEIGPALAYNWGAAFCQLLLSVGGLCQLISRGSTRGASYTLWLSRFLGSFSVVISAWLRYKYWPQAFSWLGKPLILWCLFAWLVVDGSYGVCFYYVKRYERRIGHDSDRKTV</sequence>
<gene>
    <name evidence="6" type="primary">atmB</name>
</gene>
<comment type="function">
    <text evidence="3 5">Terpene cyclase; part of the ATM2 gene cluster that mediates the biosynthesis of aflatrem, a tremorgenic mycotoxin with acute neurotoxic effects (PubMed:19801473, PubMed:2867895). Synthesis of geranylgeranyl diphosphate (GGPP) by AtmG (a GGPP synthase) precedes condensation of GGPP with indole 3-glycerol phosphate, followed by epoxidation and cyclization by AtmM (a FAD-dependent monooxygenase) and AtmC (a prenyltransferase) to produce paspaline (PubMed:19801473). AtmB is also essential for paspaline production, but its exact role has not been identified yet (PubMed:19801473). AtmP, a cytochrome P450 monooxygenase, subsequently converts paspaline to 13-desoxypaxilline via PC-M6 by removal of the C-30 methyl group and oxidation at C-10 (PubMed:19801473). AtmQ, a cytochrome P450 monooxygenase, then catalyzes the oxidation of 13-desoxypaxilline, first at C-7 to produce paspalicine and then at C-13 to form paspalinine (PubMed:19801473). Finally, AtmD prenylates paspalinine to form aflatrem (PubMed:19801473).</text>
</comment>
<comment type="subcellular location">
    <subcellularLocation>
        <location evidence="2">Membrane</location>
        <topology evidence="2">Multi-pass membrane protein</topology>
    </subcellularLocation>
</comment>
<comment type="induction">
    <text evidence="3 4">The onset of expression occurs at 48-hour-old stationary cultures and the steady-state levels correlates with the onset of aflatrem biosynthesis at 108 hours (PubMed:19801473). Expression is regulated by nsdC (PubMed:26686623).</text>
</comment>
<comment type="similarity">
    <text evidence="7">Belongs to the paxB family.</text>
</comment>
<accession>A9JPE3</accession>
<proteinExistence type="evidence at transcript level"/>
<evidence type="ECO:0000250" key="1">
    <source>
        <dbReference type="UniProtKB" id="Q0C8A7"/>
    </source>
</evidence>
<evidence type="ECO:0000255" key="2"/>
<evidence type="ECO:0000269" key="3">
    <source>
    </source>
</evidence>
<evidence type="ECO:0000269" key="4">
    <source>
    </source>
</evidence>
<evidence type="ECO:0000269" key="5">
    <source>
    </source>
</evidence>
<evidence type="ECO:0000303" key="6">
    <source>
    </source>
</evidence>
<evidence type="ECO:0000305" key="7"/>
<feature type="chain" id="PRO_0000436121" description="Terpene cyclase atmB">
    <location>
        <begin position="1"/>
        <end position="243"/>
    </location>
</feature>
<feature type="transmembrane region" description="Helical" evidence="2">
    <location>
        <begin position="19"/>
        <end position="39"/>
    </location>
</feature>
<feature type="transmembrane region" description="Helical" evidence="2">
    <location>
        <begin position="48"/>
        <end position="68"/>
    </location>
</feature>
<feature type="transmembrane region" description="Helical" evidence="2">
    <location>
        <begin position="78"/>
        <end position="98"/>
    </location>
</feature>
<feature type="transmembrane region" description="Helical" evidence="2">
    <location>
        <begin position="112"/>
        <end position="132"/>
    </location>
</feature>
<feature type="transmembrane region" description="Helical" evidence="2">
    <location>
        <begin position="134"/>
        <end position="154"/>
    </location>
</feature>
<feature type="transmembrane region" description="Helical" evidence="2">
    <location>
        <begin position="169"/>
        <end position="189"/>
    </location>
</feature>
<feature type="transmembrane region" description="Helical" evidence="2">
    <location>
        <begin position="205"/>
        <end position="225"/>
    </location>
</feature>
<keyword id="KW-0456">Lyase</keyword>
<keyword id="KW-0472">Membrane</keyword>
<keyword id="KW-0812">Transmembrane</keyword>
<keyword id="KW-1133">Transmembrane helix</keyword>
<organism>
    <name type="scientific">Aspergillus flavus</name>
    <dbReference type="NCBI Taxonomy" id="5059"/>
    <lineage>
        <taxon>Eukaryota</taxon>
        <taxon>Fungi</taxon>
        <taxon>Dikarya</taxon>
        <taxon>Ascomycota</taxon>
        <taxon>Pezizomycotina</taxon>
        <taxon>Eurotiomycetes</taxon>
        <taxon>Eurotiomycetidae</taxon>
        <taxon>Eurotiales</taxon>
        <taxon>Aspergillaceae</taxon>
        <taxon>Aspergillus</taxon>
        <taxon>Aspergillus subgen. Circumdati</taxon>
    </lineage>
</organism>